<sequence>MQTIINKLYEQQGLTQAESQQLFDQIIRGEMDPVLMAAVLTALKIKGETPDEIAGAAKALLANANPFPRPDYDFADIVGTGGDGSNTINISTTAAFVAAACGVKVAKHGNRGVSSKSGSSDLLSSFGINLAMSAQDSRQALDDLGVAFLFAPQYHGGVRHAMPVRQTMKTRTIFNILGPLINPARPNIELMGVYSKDLVRPIAQTMLQMGLKRAAVVHGSGLDEVAIHGETQVAEIRQGELIEYTLTPEDFGVSRYPLDAIRGGEPEENRAIITQILTGNGTAAQMAAVAVNVALLLRLFGQEDLKANTQQAIAVMKSGQAYGLVQQLAQRG</sequence>
<dbReference type="EC" id="2.4.2.18" evidence="1"/>
<dbReference type="EMBL" id="CP000627">
    <property type="protein sequence ID" value="ABQ21014.1"/>
    <property type="molecule type" value="Genomic_DNA"/>
</dbReference>
<dbReference type="EMBL" id="CP001235">
    <property type="protein sequence ID" value="ACP09299.1"/>
    <property type="status" value="ALT_INIT"/>
    <property type="molecule type" value="Genomic_DNA"/>
</dbReference>
<dbReference type="RefSeq" id="WP_001193364.1">
    <property type="nucleotide sequence ID" value="NZ_JAACZH010000002.1"/>
</dbReference>
<dbReference type="SMR" id="A5F210"/>
<dbReference type="KEGG" id="vco:VC0395_A0794"/>
<dbReference type="KEGG" id="vcr:VC395_1291"/>
<dbReference type="PATRIC" id="fig|345073.21.peg.1258"/>
<dbReference type="eggNOG" id="COG0547">
    <property type="taxonomic scope" value="Bacteria"/>
</dbReference>
<dbReference type="HOGENOM" id="CLU_034315_3_0_6"/>
<dbReference type="OrthoDB" id="9806430at2"/>
<dbReference type="UniPathway" id="UPA00035">
    <property type="reaction ID" value="UER00041"/>
</dbReference>
<dbReference type="Proteomes" id="UP000000249">
    <property type="component" value="Chromosome 2"/>
</dbReference>
<dbReference type="GO" id="GO:0005829">
    <property type="term" value="C:cytosol"/>
    <property type="evidence" value="ECO:0007669"/>
    <property type="project" value="TreeGrafter"/>
</dbReference>
<dbReference type="GO" id="GO:0004048">
    <property type="term" value="F:anthranilate phosphoribosyltransferase activity"/>
    <property type="evidence" value="ECO:0007669"/>
    <property type="project" value="UniProtKB-UniRule"/>
</dbReference>
<dbReference type="GO" id="GO:0000287">
    <property type="term" value="F:magnesium ion binding"/>
    <property type="evidence" value="ECO:0007669"/>
    <property type="project" value="UniProtKB-UniRule"/>
</dbReference>
<dbReference type="GO" id="GO:0000162">
    <property type="term" value="P:L-tryptophan biosynthetic process"/>
    <property type="evidence" value="ECO:0007669"/>
    <property type="project" value="UniProtKB-UniRule"/>
</dbReference>
<dbReference type="FunFam" id="1.20.970.10:FF:000003">
    <property type="entry name" value="Anthranilate phosphoribosyltransferase"/>
    <property type="match status" value="1"/>
</dbReference>
<dbReference type="FunFam" id="3.40.1030.10:FF:000002">
    <property type="entry name" value="Anthranilate phosphoribosyltransferase"/>
    <property type="match status" value="1"/>
</dbReference>
<dbReference type="Gene3D" id="3.40.1030.10">
    <property type="entry name" value="Nucleoside phosphorylase/phosphoribosyltransferase catalytic domain"/>
    <property type="match status" value="1"/>
</dbReference>
<dbReference type="Gene3D" id="1.20.970.10">
    <property type="entry name" value="Transferase, Pyrimidine Nucleoside Phosphorylase, Chain C"/>
    <property type="match status" value="1"/>
</dbReference>
<dbReference type="HAMAP" id="MF_00211">
    <property type="entry name" value="TrpD"/>
    <property type="match status" value="1"/>
</dbReference>
<dbReference type="InterPro" id="IPR005940">
    <property type="entry name" value="Anthranilate_Pribosyl_Tfrase"/>
</dbReference>
<dbReference type="InterPro" id="IPR000312">
    <property type="entry name" value="Glycosyl_Trfase_fam3"/>
</dbReference>
<dbReference type="InterPro" id="IPR017459">
    <property type="entry name" value="Glycosyl_Trfase_fam3_N_dom"/>
</dbReference>
<dbReference type="InterPro" id="IPR036320">
    <property type="entry name" value="Glycosyl_Trfase_fam3_N_dom_sf"/>
</dbReference>
<dbReference type="InterPro" id="IPR035902">
    <property type="entry name" value="Nuc_phospho_transferase"/>
</dbReference>
<dbReference type="NCBIfam" id="TIGR01245">
    <property type="entry name" value="trpD"/>
    <property type="match status" value="1"/>
</dbReference>
<dbReference type="PANTHER" id="PTHR43285">
    <property type="entry name" value="ANTHRANILATE PHOSPHORIBOSYLTRANSFERASE"/>
    <property type="match status" value="1"/>
</dbReference>
<dbReference type="PANTHER" id="PTHR43285:SF2">
    <property type="entry name" value="ANTHRANILATE PHOSPHORIBOSYLTRANSFERASE"/>
    <property type="match status" value="1"/>
</dbReference>
<dbReference type="Pfam" id="PF02885">
    <property type="entry name" value="Glycos_trans_3N"/>
    <property type="match status" value="1"/>
</dbReference>
<dbReference type="Pfam" id="PF00591">
    <property type="entry name" value="Glycos_transf_3"/>
    <property type="match status" value="1"/>
</dbReference>
<dbReference type="SUPFAM" id="SSF52418">
    <property type="entry name" value="Nucleoside phosphorylase/phosphoribosyltransferase catalytic domain"/>
    <property type="match status" value="1"/>
</dbReference>
<dbReference type="SUPFAM" id="SSF47648">
    <property type="entry name" value="Nucleoside phosphorylase/phosphoribosyltransferase N-terminal domain"/>
    <property type="match status" value="1"/>
</dbReference>
<reference key="1">
    <citation type="submission" date="2007-03" db="EMBL/GenBank/DDBJ databases">
        <authorList>
            <person name="Heidelberg J."/>
        </authorList>
    </citation>
    <scope>NUCLEOTIDE SEQUENCE [LARGE SCALE GENOMIC DNA]</scope>
    <source>
        <strain>ATCC 39541 / Classical Ogawa 395 / O395</strain>
    </source>
</reference>
<reference key="2">
    <citation type="journal article" date="2008" name="PLoS ONE">
        <title>A recalibrated molecular clock and independent origins for the cholera pandemic clones.</title>
        <authorList>
            <person name="Feng L."/>
            <person name="Reeves P.R."/>
            <person name="Lan R."/>
            <person name="Ren Y."/>
            <person name="Gao C."/>
            <person name="Zhou Z."/>
            <person name="Ren Y."/>
            <person name="Cheng J."/>
            <person name="Wang W."/>
            <person name="Wang J."/>
            <person name="Qian W."/>
            <person name="Li D."/>
            <person name="Wang L."/>
        </authorList>
    </citation>
    <scope>NUCLEOTIDE SEQUENCE [LARGE SCALE GENOMIC DNA]</scope>
    <source>
        <strain>ATCC 39541 / Classical Ogawa 395 / O395</strain>
    </source>
</reference>
<organism>
    <name type="scientific">Vibrio cholerae serotype O1 (strain ATCC 39541 / Classical Ogawa 395 / O395)</name>
    <dbReference type="NCBI Taxonomy" id="345073"/>
    <lineage>
        <taxon>Bacteria</taxon>
        <taxon>Pseudomonadati</taxon>
        <taxon>Pseudomonadota</taxon>
        <taxon>Gammaproteobacteria</taxon>
        <taxon>Vibrionales</taxon>
        <taxon>Vibrionaceae</taxon>
        <taxon>Vibrio</taxon>
    </lineage>
</organism>
<gene>
    <name evidence="1" type="primary">trpD</name>
    <name type="ordered locus">VC0395_A0794</name>
    <name type="ordered locus">VC395_1291</name>
</gene>
<proteinExistence type="inferred from homology"/>
<accession>A5F210</accession>
<accession>C3LZT3</accession>
<keyword id="KW-0028">Amino-acid biosynthesis</keyword>
<keyword id="KW-0057">Aromatic amino acid biosynthesis</keyword>
<keyword id="KW-0328">Glycosyltransferase</keyword>
<keyword id="KW-0460">Magnesium</keyword>
<keyword id="KW-0479">Metal-binding</keyword>
<keyword id="KW-0808">Transferase</keyword>
<keyword id="KW-0822">Tryptophan biosynthesis</keyword>
<evidence type="ECO:0000255" key="1">
    <source>
        <dbReference type="HAMAP-Rule" id="MF_00211"/>
    </source>
</evidence>
<evidence type="ECO:0000305" key="2"/>
<protein>
    <recommendedName>
        <fullName evidence="1">Anthranilate phosphoribosyltransferase</fullName>
        <ecNumber evidence="1">2.4.2.18</ecNumber>
    </recommendedName>
</protein>
<name>TRPD_VIBC3</name>
<feature type="chain" id="PRO_1000071746" description="Anthranilate phosphoribosyltransferase">
    <location>
        <begin position="1"/>
        <end position="332"/>
    </location>
</feature>
<feature type="binding site" evidence="1">
    <location>
        <position position="79"/>
    </location>
    <ligand>
        <name>5-phospho-alpha-D-ribose 1-diphosphate</name>
        <dbReference type="ChEBI" id="CHEBI:58017"/>
    </ligand>
</feature>
<feature type="binding site" evidence="1">
    <location>
        <position position="79"/>
    </location>
    <ligand>
        <name>anthranilate</name>
        <dbReference type="ChEBI" id="CHEBI:16567"/>
        <label>1</label>
    </ligand>
</feature>
<feature type="binding site" evidence="1">
    <location>
        <begin position="82"/>
        <end position="83"/>
    </location>
    <ligand>
        <name>5-phospho-alpha-D-ribose 1-diphosphate</name>
        <dbReference type="ChEBI" id="CHEBI:58017"/>
    </ligand>
</feature>
<feature type="binding site" evidence="1">
    <location>
        <position position="87"/>
    </location>
    <ligand>
        <name>5-phospho-alpha-D-ribose 1-diphosphate</name>
        <dbReference type="ChEBI" id="CHEBI:58017"/>
    </ligand>
</feature>
<feature type="binding site" evidence="1">
    <location>
        <begin position="89"/>
        <end position="92"/>
    </location>
    <ligand>
        <name>5-phospho-alpha-D-ribose 1-diphosphate</name>
        <dbReference type="ChEBI" id="CHEBI:58017"/>
    </ligand>
</feature>
<feature type="binding site" evidence="1">
    <location>
        <position position="91"/>
    </location>
    <ligand>
        <name>Mg(2+)</name>
        <dbReference type="ChEBI" id="CHEBI:18420"/>
        <label>1</label>
    </ligand>
</feature>
<feature type="binding site" evidence="1">
    <location>
        <begin position="107"/>
        <end position="115"/>
    </location>
    <ligand>
        <name>5-phospho-alpha-D-ribose 1-diphosphate</name>
        <dbReference type="ChEBI" id="CHEBI:58017"/>
    </ligand>
</feature>
<feature type="binding site" evidence="1">
    <location>
        <position position="110"/>
    </location>
    <ligand>
        <name>anthranilate</name>
        <dbReference type="ChEBI" id="CHEBI:16567"/>
        <label>1</label>
    </ligand>
</feature>
<feature type="binding site" evidence="1">
    <location>
        <position position="119"/>
    </location>
    <ligand>
        <name>5-phospho-alpha-D-ribose 1-diphosphate</name>
        <dbReference type="ChEBI" id="CHEBI:58017"/>
    </ligand>
</feature>
<feature type="binding site" evidence="1">
    <location>
        <position position="165"/>
    </location>
    <ligand>
        <name>anthranilate</name>
        <dbReference type="ChEBI" id="CHEBI:16567"/>
        <label>2</label>
    </ligand>
</feature>
<feature type="binding site" evidence="1">
    <location>
        <position position="223"/>
    </location>
    <ligand>
        <name>Mg(2+)</name>
        <dbReference type="ChEBI" id="CHEBI:18420"/>
        <label>2</label>
    </ligand>
</feature>
<feature type="binding site" evidence="1">
    <location>
        <position position="224"/>
    </location>
    <ligand>
        <name>Mg(2+)</name>
        <dbReference type="ChEBI" id="CHEBI:18420"/>
        <label>1</label>
    </ligand>
</feature>
<feature type="binding site" evidence="1">
    <location>
        <position position="224"/>
    </location>
    <ligand>
        <name>Mg(2+)</name>
        <dbReference type="ChEBI" id="CHEBI:18420"/>
        <label>2</label>
    </ligand>
</feature>
<comment type="function">
    <text evidence="1">Catalyzes the transfer of the phosphoribosyl group of 5-phosphorylribose-1-pyrophosphate (PRPP) to anthranilate to yield N-(5'-phosphoribosyl)-anthranilate (PRA).</text>
</comment>
<comment type="catalytic activity">
    <reaction evidence="1">
        <text>N-(5-phospho-beta-D-ribosyl)anthranilate + diphosphate = 5-phospho-alpha-D-ribose 1-diphosphate + anthranilate</text>
        <dbReference type="Rhea" id="RHEA:11768"/>
        <dbReference type="ChEBI" id="CHEBI:16567"/>
        <dbReference type="ChEBI" id="CHEBI:18277"/>
        <dbReference type="ChEBI" id="CHEBI:33019"/>
        <dbReference type="ChEBI" id="CHEBI:58017"/>
        <dbReference type="EC" id="2.4.2.18"/>
    </reaction>
</comment>
<comment type="cofactor">
    <cofactor evidence="1">
        <name>Mg(2+)</name>
        <dbReference type="ChEBI" id="CHEBI:18420"/>
    </cofactor>
    <text evidence="1">Binds 2 magnesium ions per monomer.</text>
</comment>
<comment type="pathway">
    <text evidence="1">Amino-acid biosynthesis; L-tryptophan biosynthesis; L-tryptophan from chorismate: step 2/5.</text>
</comment>
<comment type="subunit">
    <text evidence="1">Homodimer.</text>
</comment>
<comment type="similarity">
    <text evidence="1">Belongs to the anthranilate phosphoribosyltransferase family.</text>
</comment>
<comment type="sequence caution" evidence="2">
    <conflict type="erroneous initiation">
        <sequence resource="EMBL-CDS" id="ACP09299"/>
    </conflict>
    <text>Extended N-terminus.</text>
</comment>